<keyword id="KW-0002">3D-structure</keyword>
<keyword id="KW-1185">Reference proteome</keyword>
<name>YKVR_BACSU</name>
<proteinExistence type="evidence at protein level"/>
<feature type="chain" id="PRO_0000360537" description="Uncharacterized protein YkvR">
    <location>
        <begin position="1"/>
        <end position="96"/>
    </location>
</feature>
<feature type="strand" evidence="1">
    <location>
        <begin position="4"/>
        <end position="6"/>
    </location>
</feature>
<feature type="strand" evidence="1">
    <location>
        <begin position="9"/>
        <end position="11"/>
    </location>
</feature>
<feature type="strand" evidence="1">
    <location>
        <begin position="14"/>
        <end position="19"/>
    </location>
</feature>
<feature type="strand" evidence="1">
    <location>
        <begin position="21"/>
        <end position="23"/>
    </location>
</feature>
<feature type="strand" evidence="1">
    <location>
        <begin position="25"/>
        <end position="32"/>
    </location>
</feature>
<feature type="turn" evidence="1">
    <location>
        <begin position="34"/>
        <end position="36"/>
    </location>
</feature>
<feature type="helix" evidence="1">
    <location>
        <begin position="37"/>
        <end position="40"/>
    </location>
</feature>
<feature type="strand" evidence="1">
    <location>
        <begin position="49"/>
        <end position="53"/>
    </location>
</feature>
<feature type="turn" evidence="1">
    <location>
        <begin position="54"/>
        <end position="57"/>
    </location>
</feature>
<feature type="strand" evidence="1">
    <location>
        <begin position="58"/>
        <end position="63"/>
    </location>
</feature>
<feature type="strand" evidence="1">
    <location>
        <begin position="79"/>
        <end position="88"/>
    </location>
</feature>
<organism>
    <name type="scientific">Bacillus subtilis (strain 168)</name>
    <dbReference type="NCBI Taxonomy" id="224308"/>
    <lineage>
        <taxon>Bacteria</taxon>
        <taxon>Bacillati</taxon>
        <taxon>Bacillota</taxon>
        <taxon>Bacilli</taxon>
        <taxon>Bacillales</taxon>
        <taxon>Bacillaceae</taxon>
        <taxon>Bacillus</taxon>
    </lineage>
</organism>
<sequence length="96" mass="11063">MKTLRLNNVTLEMAAYQEESEPKRKIAFTLNVTSETYHDIAVLLYEKTFNVEVPERDLAFRGEMTNYSTSLTNLYEPGAVSEFYIEITEIDKNADS</sequence>
<evidence type="ECO:0007829" key="1">
    <source>
        <dbReference type="PDB" id="2JN9"/>
    </source>
</evidence>
<reference key="1">
    <citation type="journal article" date="1997" name="Nature">
        <title>The complete genome sequence of the Gram-positive bacterium Bacillus subtilis.</title>
        <authorList>
            <person name="Kunst F."/>
            <person name="Ogasawara N."/>
            <person name="Moszer I."/>
            <person name="Albertini A.M."/>
            <person name="Alloni G."/>
            <person name="Azevedo V."/>
            <person name="Bertero M.G."/>
            <person name="Bessieres P."/>
            <person name="Bolotin A."/>
            <person name="Borchert S."/>
            <person name="Borriss R."/>
            <person name="Boursier L."/>
            <person name="Brans A."/>
            <person name="Braun M."/>
            <person name="Brignell S.C."/>
            <person name="Bron S."/>
            <person name="Brouillet S."/>
            <person name="Bruschi C.V."/>
            <person name="Caldwell B."/>
            <person name="Capuano V."/>
            <person name="Carter N.M."/>
            <person name="Choi S.-K."/>
            <person name="Codani J.-J."/>
            <person name="Connerton I.F."/>
            <person name="Cummings N.J."/>
            <person name="Daniel R.A."/>
            <person name="Denizot F."/>
            <person name="Devine K.M."/>
            <person name="Duesterhoeft A."/>
            <person name="Ehrlich S.D."/>
            <person name="Emmerson P.T."/>
            <person name="Entian K.-D."/>
            <person name="Errington J."/>
            <person name="Fabret C."/>
            <person name="Ferrari E."/>
            <person name="Foulger D."/>
            <person name="Fritz C."/>
            <person name="Fujita M."/>
            <person name="Fujita Y."/>
            <person name="Fuma S."/>
            <person name="Galizzi A."/>
            <person name="Galleron N."/>
            <person name="Ghim S.-Y."/>
            <person name="Glaser P."/>
            <person name="Goffeau A."/>
            <person name="Golightly E.J."/>
            <person name="Grandi G."/>
            <person name="Guiseppi G."/>
            <person name="Guy B.J."/>
            <person name="Haga K."/>
            <person name="Haiech J."/>
            <person name="Harwood C.R."/>
            <person name="Henaut A."/>
            <person name="Hilbert H."/>
            <person name="Holsappel S."/>
            <person name="Hosono S."/>
            <person name="Hullo M.-F."/>
            <person name="Itaya M."/>
            <person name="Jones L.-M."/>
            <person name="Joris B."/>
            <person name="Karamata D."/>
            <person name="Kasahara Y."/>
            <person name="Klaerr-Blanchard M."/>
            <person name="Klein C."/>
            <person name="Kobayashi Y."/>
            <person name="Koetter P."/>
            <person name="Koningstein G."/>
            <person name="Krogh S."/>
            <person name="Kumano M."/>
            <person name="Kurita K."/>
            <person name="Lapidus A."/>
            <person name="Lardinois S."/>
            <person name="Lauber J."/>
            <person name="Lazarevic V."/>
            <person name="Lee S.-M."/>
            <person name="Levine A."/>
            <person name="Liu H."/>
            <person name="Masuda S."/>
            <person name="Mauel C."/>
            <person name="Medigue C."/>
            <person name="Medina N."/>
            <person name="Mellado R.P."/>
            <person name="Mizuno M."/>
            <person name="Moestl D."/>
            <person name="Nakai S."/>
            <person name="Noback M."/>
            <person name="Noone D."/>
            <person name="O'Reilly M."/>
            <person name="Ogawa K."/>
            <person name="Ogiwara A."/>
            <person name="Oudega B."/>
            <person name="Park S.-H."/>
            <person name="Parro V."/>
            <person name="Pohl T.M."/>
            <person name="Portetelle D."/>
            <person name="Porwollik S."/>
            <person name="Prescott A.M."/>
            <person name="Presecan E."/>
            <person name="Pujic P."/>
            <person name="Purnelle B."/>
            <person name="Rapoport G."/>
            <person name="Rey M."/>
            <person name="Reynolds S."/>
            <person name="Rieger M."/>
            <person name="Rivolta C."/>
            <person name="Rocha E."/>
            <person name="Roche B."/>
            <person name="Rose M."/>
            <person name="Sadaie Y."/>
            <person name="Sato T."/>
            <person name="Scanlan E."/>
            <person name="Schleich S."/>
            <person name="Schroeter R."/>
            <person name="Scoffone F."/>
            <person name="Sekiguchi J."/>
            <person name="Sekowska A."/>
            <person name="Seror S.J."/>
            <person name="Serror P."/>
            <person name="Shin B.-S."/>
            <person name="Soldo B."/>
            <person name="Sorokin A."/>
            <person name="Tacconi E."/>
            <person name="Takagi T."/>
            <person name="Takahashi H."/>
            <person name="Takemaru K."/>
            <person name="Takeuchi M."/>
            <person name="Tamakoshi A."/>
            <person name="Tanaka T."/>
            <person name="Terpstra P."/>
            <person name="Tognoni A."/>
            <person name="Tosato V."/>
            <person name="Uchiyama S."/>
            <person name="Vandenbol M."/>
            <person name="Vannier F."/>
            <person name="Vassarotti A."/>
            <person name="Viari A."/>
            <person name="Wambutt R."/>
            <person name="Wedler E."/>
            <person name="Wedler H."/>
            <person name="Weitzenegger T."/>
            <person name="Winters P."/>
            <person name="Wipat A."/>
            <person name="Yamamoto H."/>
            <person name="Yamane K."/>
            <person name="Yasumoto K."/>
            <person name="Yata K."/>
            <person name="Yoshida K."/>
            <person name="Yoshikawa H.-F."/>
            <person name="Zumstein E."/>
            <person name="Yoshikawa H."/>
            <person name="Danchin A."/>
        </authorList>
    </citation>
    <scope>NUCLEOTIDE SEQUENCE [LARGE SCALE GENOMIC DNA]</scope>
    <source>
        <strain>168</strain>
    </source>
</reference>
<reference key="2">
    <citation type="submission" date="2007-05" db="PDB data bank">
        <title>NMR solution structure of ykvR protein from Bacillus subtilis: NESG target SR358.</title>
        <authorList>
            <consortium name="Northeast structural genomics consortium (NESG)"/>
        </authorList>
    </citation>
    <scope>STRUCTURE BY NMR</scope>
</reference>
<protein>
    <recommendedName>
        <fullName>Uncharacterized protein YkvR</fullName>
    </recommendedName>
</protein>
<gene>
    <name type="primary">ykvR</name>
    <name type="ordered locus">BSU13800</name>
</gene>
<dbReference type="EMBL" id="AL009126">
    <property type="protein sequence ID" value="CAB13253.1"/>
    <property type="molecule type" value="Genomic_DNA"/>
</dbReference>
<dbReference type="PIR" id="A69869">
    <property type="entry name" value="A69869"/>
</dbReference>
<dbReference type="RefSeq" id="NP_389263.1">
    <property type="nucleotide sequence ID" value="NC_000964.3"/>
</dbReference>
<dbReference type="RefSeq" id="WP_003245399.1">
    <property type="nucleotide sequence ID" value="NZ_OZ025638.1"/>
</dbReference>
<dbReference type="PDB" id="2JN9">
    <property type="method" value="NMR"/>
    <property type="chains" value="A=2-96"/>
</dbReference>
<dbReference type="PDBsum" id="2JN9"/>
<dbReference type="BMRB" id="O31683"/>
<dbReference type="SMR" id="O31683"/>
<dbReference type="FunCoup" id="O31683">
    <property type="interactions" value="81"/>
</dbReference>
<dbReference type="PaxDb" id="224308-BSU13800"/>
<dbReference type="EnsemblBacteria" id="CAB13253">
    <property type="protein sequence ID" value="CAB13253"/>
    <property type="gene ID" value="BSU_13800"/>
</dbReference>
<dbReference type="GeneID" id="939743"/>
<dbReference type="KEGG" id="bsu:BSU13800"/>
<dbReference type="PATRIC" id="fig|224308.179.peg.1502"/>
<dbReference type="eggNOG" id="ENOG5032ZH2">
    <property type="taxonomic scope" value="Bacteria"/>
</dbReference>
<dbReference type="InParanoid" id="O31683"/>
<dbReference type="OrthoDB" id="2920197at2"/>
<dbReference type="BioCyc" id="BSUB:BSU13800-MONOMER"/>
<dbReference type="EvolutionaryTrace" id="O31683"/>
<dbReference type="Proteomes" id="UP000001570">
    <property type="component" value="Chromosome"/>
</dbReference>
<dbReference type="Gene3D" id="2.40.30.80">
    <property type="entry name" value="YkvR-like"/>
    <property type="match status" value="1"/>
</dbReference>
<dbReference type="InterPro" id="IPR021596">
    <property type="entry name" value="DUF3219"/>
</dbReference>
<dbReference type="InterPro" id="IPR023105">
    <property type="entry name" value="YkvR-like_sf"/>
</dbReference>
<dbReference type="Pfam" id="PF11514">
    <property type="entry name" value="DUF3219"/>
    <property type="match status" value="1"/>
</dbReference>
<dbReference type="SUPFAM" id="SSF159173">
    <property type="entry name" value="YkvR-like"/>
    <property type="match status" value="1"/>
</dbReference>
<accession>O31683</accession>